<reference key="1">
    <citation type="submission" date="2010-02" db="EMBL/GenBank/DDBJ databases">
        <title>Complete genomic sequence of Lactococcus lactis phage p2.</title>
        <authorList>
            <person name="Tremblay D.M."/>
            <person name="Deveau H."/>
            <person name="Moineau S."/>
        </authorList>
    </citation>
    <scope>NUCLEOTIDE SEQUENCE [LARGE SCALE GENOMIC DNA]</scope>
</reference>
<reference evidence="4 5" key="2">
    <citation type="journal article" date="2010" name="Proc. Natl. Acad. Sci. U.S.A.">
        <title>Structure of lactococcal phage p2 baseplate and its mechanism of activation.</title>
        <authorList>
            <person name="Sciara G."/>
            <person name="Bebeacua C."/>
            <person name="Bron P."/>
            <person name="Tremblay D."/>
            <person name="Ortiz-Lombardia M."/>
            <person name="Lichiere J."/>
            <person name="van Heel M."/>
            <person name="Campanacci V."/>
            <person name="Moineau S."/>
            <person name="Cambillau C."/>
        </authorList>
    </citation>
    <scope>X-RAY CRYSTALLOGRAPHY (2.60 ANGSTROMS) OF 51-298</scope>
    <scope>SUBUNIT</scope>
    <scope>SUBCELLULAR LOCATION</scope>
    <scope>FUNCTION</scope>
    <scope>INTERACTION WITH THE RECEPTOR BINDING PROTEIN</scope>
</reference>
<feature type="chain" id="PRO_0000438225" description="Distal tail protein">
    <location>
        <begin position="1"/>
        <end position="298"/>
    </location>
</feature>
<feature type="strand" evidence="6">
    <location>
        <begin position="4"/>
        <end position="10"/>
    </location>
</feature>
<feature type="strand" evidence="6">
    <location>
        <begin position="18"/>
        <end position="20"/>
    </location>
</feature>
<feature type="turn" evidence="6">
    <location>
        <begin position="21"/>
        <end position="23"/>
    </location>
</feature>
<feature type="strand" evidence="6">
    <location>
        <begin position="24"/>
        <end position="29"/>
    </location>
</feature>
<feature type="strand" evidence="6">
    <location>
        <begin position="37"/>
        <end position="39"/>
    </location>
</feature>
<feature type="strand" evidence="6">
    <location>
        <begin position="43"/>
        <end position="45"/>
    </location>
</feature>
<feature type="strand" evidence="6">
    <location>
        <begin position="48"/>
        <end position="50"/>
    </location>
</feature>
<feature type="strand" evidence="6">
    <location>
        <begin position="55"/>
        <end position="57"/>
    </location>
</feature>
<feature type="strand" evidence="6">
    <location>
        <begin position="61"/>
        <end position="67"/>
    </location>
</feature>
<feature type="helix" evidence="6">
    <location>
        <begin position="72"/>
        <end position="87"/>
    </location>
</feature>
<feature type="strand" evidence="6">
    <location>
        <begin position="92"/>
        <end position="97"/>
    </location>
</feature>
<feature type="strand" evidence="6">
    <location>
        <begin position="102"/>
        <end position="112"/>
    </location>
</feature>
<feature type="helix" evidence="6">
    <location>
        <begin position="120"/>
        <end position="122"/>
    </location>
</feature>
<feature type="strand" evidence="6">
    <location>
        <begin position="125"/>
        <end position="145"/>
    </location>
</feature>
<feature type="turn" evidence="6">
    <location>
        <begin position="154"/>
        <end position="156"/>
    </location>
</feature>
<feature type="strand" evidence="6">
    <location>
        <begin position="160"/>
        <end position="163"/>
    </location>
</feature>
<feature type="turn" evidence="6">
    <location>
        <begin position="172"/>
        <end position="174"/>
    </location>
</feature>
<feature type="helix" evidence="6">
    <location>
        <begin position="184"/>
        <end position="188"/>
    </location>
</feature>
<feature type="strand" evidence="6">
    <location>
        <begin position="190"/>
        <end position="192"/>
    </location>
</feature>
<feature type="strand" evidence="6">
    <location>
        <begin position="196"/>
        <end position="205"/>
    </location>
</feature>
<feature type="strand" evidence="6">
    <location>
        <begin position="212"/>
        <end position="218"/>
    </location>
</feature>
<feature type="strand" evidence="6">
    <location>
        <begin position="223"/>
        <end position="229"/>
    </location>
</feature>
<feature type="strand" evidence="6">
    <location>
        <begin position="236"/>
        <end position="241"/>
    </location>
</feature>
<feature type="strand" evidence="6">
    <location>
        <begin position="248"/>
        <end position="253"/>
    </location>
</feature>
<feature type="strand" evidence="6">
    <location>
        <begin position="256"/>
        <end position="259"/>
    </location>
</feature>
<feature type="helix" evidence="6">
    <location>
        <begin position="261"/>
        <end position="263"/>
    </location>
</feature>
<feature type="turn" evidence="6">
    <location>
        <begin position="266"/>
        <end position="268"/>
    </location>
</feature>
<feature type="strand" evidence="6">
    <location>
        <begin position="276"/>
        <end position="294"/>
    </location>
</feature>
<dbReference type="EMBL" id="GQ979703">
    <property type="protein sequence ID" value="ADC80090.1"/>
    <property type="molecule type" value="Genomic_DNA"/>
</dbReference>
<dbReference type="RefSeq" id="YP_009613495.1">
    <property type="nucleotide sequence ID" value="NC_042024.1"/>
</dbReference>
<dbReference type="PDB" id="2WZP">
    <property type="method" value="X-ray"/>
    <property type="resolution" value="2.60 A"/>
    <property type="chains" value="P/Q=2-298"/>
</dbReference>
<dbReference type="PDB" id="2X53">
    <property type="method" value="X-ray"/>
    <property type="resolution" value="3.90 A"/>
    <property type="chains" value="S/T/U/V/W/X=2-298"/>
</dbReference>
<dbReference type="PDB" id="6ZIG">
    <property type="method" value="EM"/>
    <property type="resolution" value="42.20 A"/>
    <property type="chains" value="2/3/4/5/6/7/S/T/U/V/W/X=1-298"/>
</dbReference>
<dbReference type="PDB" id="6ZIH">
    <property type="method" value="EM"/>
    <property type="resolution" value="28.70 A"/>
    <property type="chains" value="2/3/4/5/6/7/S/T/U/V/W/X=1-298"/>
</dbReference>
<dbReference type="PDB" id="6ZJJ">
    <property type="method" value="EM"/>
    <property type="resolution" value="22.00 A"/>
    <property type="chains" value="2/3/4/5/6/7/S/T/U/V/W/X=1-298"/>
</dbReference>
<dbReference type="PDBsum" id="2WZP"/>
<dbReference type="PDBsum" id="2X53"/>
<dbReference type="PDBsum" id="6ZIG"/>
<dbReference type="PDBsum" id="6ZIH"/>
<dbReference type="PDBsum" id="6ZJJ"/>
<dbReference type="EMDB" id="EMD-11225"/>
<dbReference type="EMDB" id="EMD-11226"/>
<dbReference type="SMR" id="D3WAD3"/>
<dbReference type="DIP" id="DIP-59523N"/>
<dbReference type="IntAct" id="D3WAD3">
    <property type="interactions" value="2"/>
</dbReference>
<dbReference type="GeneID" id="40089870"/>
<dbReference type="EvolutionaryTrace" id="D3WAD3"/>
<dbReference type="Proteomes" id="UP000002348">
    <property type="component" value="Segment"/>
</dbReference>
<dbReference type="GO" id="GO:0098015">
    <property type="term" value="C:virus tail"/>
    <property type="evidence" value="ECO:0007669"/>
    <property type="project" value="UniProtKB-KW"/>
</dbReference>
<dbReference type="GO" id="GO:0099001">
    <property type="term" value="P:symbiont genome ejection through host cell envelope, long flexible tail mechanism"/>
    <property type="evidence" value="ECO:0007669"/>
    <property type="project" value="UniProtKB-KW"/>
</dbReference>
<dbReference type="Gene3D" id="2.40.30.210">
    <property type="match status" value="2"/>
</dbReference>
<dbReference type="Gene3D" id="2.60.120.880">
    <property type="match status" value="1"/>
</dbReference>
<dbReference type="InterPro" id="IPR048272">
    <property type="entry name" value="Dit_C"/>
</dbReference>
<dbReference type="InterPro" id="IPR031899">
    <property type="entry name" value="Dit_N"/>
</dbReference>
<dbReference type="Pfam" id="PF21766">
    <property type="entry name" value="Dit_C"/>
    <property type="match status" value="1"/>
</dbReference>
<dbReference type="Pfam" id="PF16774">
    <property type="entry name" value="Dit_N"/>
    <property type="match status" value="1"/>
</dbReference>
<sequence>MVRQYKIHTNLDGTDDKVWDVTNGKVRFYQPSNLGLQSTNNIWQSNGIGVMGTRSITQPQIEFKLETFGESLEENYQLMKDFVNDILSKKFVTLEYQTEIFQVYADLALADVTKTEGYGKNGTFSEKITFDIITKWYTYENLTFDKIQNGKVIAGMSKIYGGTAPGNYKYIKGTSYTYYGESDIDRLSRWDIKEEIFSFMGILYPKLPKTPAGVRFLDDIGNEYTAIVFKTEQVQDYILINTDVNDETYQGWKGTTALNLFPVMDFERYRTRIIEKGQMELINLSKAEFKIKRKADFV</sequence>
<evidence type="ECO:0000269" key="1">
    <source>
    </source>
</evidence>
<evidence type="ECO:0000303" key="2">
    <source>
    </source>
</evidence>
<evidence type="ECO:0000305" key="3"/>
<evidence type="ECO:0007744" key="4">
    <source>
        <dbReference type="PDB" id="2WZP"/>
    </source>
</evidence>
<evidence type="ECO:0007744" key="5">
    <source>
        <dbReference type="PDB" id="2X53"/>
    </source>
</evidence>
<evidence type="ECO:0007829" key="6">
    <source>
        <dbReference type="PDB" id="2WZP"/>
    </source>
</evidence>
<organismHost>
    <name type="scientific">Lactococcus lactis</name>
    <dbReference type="NCBI Taxonomy" id="1358"/>
</organismHost>
<proteinExistence type="evidence at protein level"/>
<keyword id="KW-0002">3D-structure</keyword>
<keyword id="KW-1171">Viral genome ejection through host cell envelope</keyword>
<keyword id="KW-1243">Viral long flexible tail ejection system</keyword>
<keyword id="KW-1162">Viral penetration into host cytoplasm</keyword>
<keyword id="KW-1227">Viral tail protein</keyword>
<keyword id="KW-0946">Virion</keyword>
<keyword id="KW-1160">Virus entry into host cell</keyword>
<accession>D3WAD3</accession>
<accession>D3KFX6</accession>
<name>DIT_BPLP2</name>
<protein>
    <recommendedName>
        <fullName evidence="2">Distal tail protein</fullName>
        <shortName>Dit</shortName>
    </recommendedName>
    <alternativeName>
        <fullName evidence="3">Gene product 15</fullName>
        <shortName evidence="3">Gp15</shortName>
    </alternativeName>
</protein>
<organism>
    <name type="scientific">Lactococcus phage p2</name>
    <name type="common">Lactococcus lactis bacteriophage p2</name>
    <dbReference type="NCBI Taxonomy" id="254252"/>
    <lineage>
        <taxon>Viruses</taxon>
        <taxon>Duplodnaviria</taxon>
        <taxon>Heunggongvirae</taxon>
        <taxon>Uroviricota</taxon>
        <taxon>Caudoviricetes</taxon>
        <taxon>Skunavirus</taxon>
    </lineage>
</organism>
<comment type="function">
    <text evidence="1">Forms the distal part of the tail. Self-associates as two rings organized back to back, with a central channel allowing DNA ejection.</text>
</comment>
<comment type="subunit">
    <text evidence="1">Homohexamer. Interacts with the receptor binding protein.</text>
</comment>
<comment type="interaction">
    <interactant intactId="EBI-15845172">
        <id>D3WAD3</id>
    </interactant>
    <interactant intactId="EBI-15845184">
        <id>D3KFX4</id>
    </interactant>
    <organismsDiffer>false</organismsDiffer>
    <experiments>8</experiments>
</comment>
<comment type="subcellular location">
    <subcellularLocation>
        <location evidence="1">Virion</location>
    </subcellularLocation>
    <text evidence="1">Part of the tail.</text>
</comment>
<comment type="similarity">
    <text evidence="3">Belongs to the skunalikevirus distal tail protein family.</text>
</comment>